<accession>P39237</accession>
<accession>Q96213</accession>
<proteinExistence type="predicted"/>
<organism>
    <name type="scientific">Enterobacteria phage T4</name>
    <name type="common">Bacteriophage T4</name>
    <dbReference type="NCBI Taxonomy" id="10665"/>
    <lineage>
        <taxon>Viruses</taxon>
        <taxon>Duplodnaviria</taxon>
        <taxon>Heunggongvirae</taxon>
        <taxon>Uroviricota</taxon>
        <taxon>Caudoviricetes</taxon>
        <taxon>Straboviridae</taxon>
        <taxon>Tevenvirinae</taxon>
        <taxon>Tequatrovirus</taxon>
    </lineage>
</organism>
<protein>
    <recommendedName>
        <fullName>Uncharacterized 6.8 kDa protein in mobD-ri intergenic region</fullName>
    </recommendedName>
</protein>
<feature type="chain" id="PRO_0000165129" description="Uncharacterized 6.8 kDa protein in mobD-ri intergenic region">
    <location>
        <begin position="1"/>
        <end position="60"/>
    </location>
</feature>
<name>Y05L_BPT4</name>
<sequence length="60" mass="6860">MISIEQADKIKELVALIRKADEERINFALSGIEEFEAKVNNAVEALDMFLDEIIDHNTRV</sequence>
<organismHost>
    <name type="scientific">Escherichia coli</name>
    <dbReference type="NCBI Taxonomy" id="562"/>
</organismHost>
<gene>
    <name type="primary">y05L</name>
    <name type="synonym">mobD.4</name>
    <name type="synonym">tk.-6</name>
</gene>
<dbReference type="EMBL" id="U76612">
    <property type="protein sequence ID" value="AAB26965.1"/>
    <property type="molecule type" value="Genomic_DNA"/>
</dbReference>
<dbReference type="EMBL" id="AF158101">
    <property type="protein sequence ID" value="AAD42596.1"/>
    <property type="molecule type" value="Genomic_DNA"/>
</dbReference>
<dbReference type="RefSeq" id="NP_049714.1">
    <property type="nucleotide sequence ID" value="NC_000866.4"/>
</dbReference>
<dbReference type="SMR" id="P39237"/>
<dbReference type="GeneID" id="1258690"/>
<dbReference type="KEGG" id="vg:1258690"/>
<dbReference type="OrthoDB" id="25120at10239"/>
<dbReference type="Proteomes" id="UP000009087">
    <property type="component" value="Segment"/>
</dbReference>
<dbReference type="InterPro" id="IPR055861">
    <property type="entry name" value="DUF7438"/>
</dbReference>
<dbReference type="Pfam" id="PF24219">
    <property type="entry name" value="DUF7438"/>
    <property type="match status" value="1"/>
</dbReference>
<keyword id="KW-1185">Reference proteome</keyword>
<reference key="1">
    <citation type="submission" date="1996-11" db="EMBL/GenBank/DDBJ databases">
        <title>The 10.7 kb 'nonessential' region of bacteriophage T4 between the genes tk and nrdC: twenty new t4 genes, generally conserved among T-even phages.</title>
        <authorList>
            <person name="Mzhavia N."/>
            <person name="Marusich E."/>
            <person name="Djavakhishvili T."/>
            <person name="Neitzel J."/>
            <person name="Peterson S."/>
            <person name="Awaya M."/>
            <person name="Eidermiller J."/>
            <person name="Canada D."/>
            <person name="Tracy J."/>
            <person name="Gailbreath K."/>
            <person name="Paddison P."/>
            <person name="Anderson B."/>
            <person name="Stidham T."/>
            <person name="Blattner F."/>
            <person name="Kutter E.M."/>
        </authorList>
    </citation>
    <scope>NUCLEOTIDE SEQUENCE [GENOMIC DNA]</scope>
</reference>
<reference key="2">
    <citation type="journal article" date="2003" name="Microbiol. Mol. Biol. Rev.">
        <title>Bacteriophage T4 genome.</title>
        <authorList>
            <person name="Miller E.S."/>
            <person name="Kutter E."/>
            <person name="Mosig G."/>
            <person name="Arisaka F."/>
            <person name="Kunisawa T."/>
            <person name="Ruger W."/>
        </authorList>
    </citation>
    <scope>NUCLEOTIDE SEQUENCE [LARGE SCALE GENOMIC DNA]</scope>
</reference>